<accession>Q06R97</accession>
<evidence type="ECO:0000255" key="1">
    <source>
        <dbReference type="HAMAP-Rule" id="MF_00075"/>
    </source>
</evidence>
<keyword id="KW-0150">Chloroplast</keyword>
<keyword id="KW-0396">Initiation factor</keyword>
<keyword id="KW-0934">Plastid</keyword>
<keyword id="KW-0648">Protein biosynthesis</keyword>
<keyword id="KW-0694">RNA-binding</keyword>
<keyword id="KW-0699">rRNA-binding</keyword>
<comment type="function">
    <text evidence="1">One of the essential components for the initiation of protein synthesis. Stabilizes the binding of IF-2 and IF-3 on the 30S subunit to which N-formylmethionyl-tRNA(fMet) subsequently binds. Helps modulate mRNA selection, yielding the 30S pre-initiation complex (PIC). Upon addition of the 50S ribosomal subunit IF-1, IF-2 and IF-3 are released leaving the mature 70S translation initiation complex.</text>
</comment>
<comment type="subunit">
    <text evidence="1">Component of the 30S ribosomal translation pre-initiation complex which assembles on the 30S ribosome in the order IF-2 and IF-3, IF-1 and N-formylmethionyl-tRNA(fMet); mRNA recruitment can occur at any time during PIC assembly.</text>
</comment>
<comment type="subcellular location">
    <subcellularLocation>
        <location evidence="1">Plastid</location>
        <location evidence="1">Chloroplast</location>
    </subcellularLocation>
</comment>
<comment type="similarity">
    <text evidence="1">Belongs to the IF-1 family.</text>
</comment>
<protein>
    <recommendedName>
        <fullName evidence="1">Translation initiation factor IF-1, chloroplastic</fullName>
    </recommendedName>
</protein>
<feature type="chain" id="PRO_0000275393" description="Translation initiation factor IF-1, chloroplastic">
    <location>
        <begin position="1"/>
        <end position="89"/>
    </location>
</feature>
<feature type="domain" description="S1-like" evidence="1">
    <location>
        <begin position="1"/>
        <end position="73"/>
    </location>
</feature>
<sequence length="89" mass="10158">MKEKEAKWVVEGLVTEGHPSGMFRVQLDNGARVLGYISGKIRRKAIRIMQGDRVQIELSHYDLTKGRIIYRLPPPPIPKPKDSEDDSED</sequence>
<organism>
    <name type="scientific">Jasminum nudiflorum</name>
    <name type="common">Winter jasmine</name>
    <dbReference type="NCBI Taxonomy" id="126431"/>
    <lineage>
        <taxon>Eukaryota</taxon>
        <taxon>Viridiplantae</taxon>
        <taxon>Streptophyta</taxon>
        <taxon>Embryophyta</taxon>
        <taxon>Tracheophyta</taxon>
        <taxon>Spermatophyta</taxon>
        <taxon>Magnoliopsida</taxon>
        <taxon>eudicotyledons</taxon>
        <taxon>Gunneridae</taxon>
        <taxon>Pentapetalae</taxon>
        <taxon>asterids</taxon>
        <taxon>lamiids</taxon>
        <taxon>Lamiales</taxon>
        <taxon>Oleaceae</taxon>
        <taxon>Jasmineae</taxon>
        <taxon>Jasminum</taxon>
    </lineage>
</organism>
<gene>
    <name evidence="1" type="primary">infA</name>
    <name type="ORF">JNC0882</name>
</gene>
<geneLocation type="chloroplast"/>
<proteinExistence type="inferred from homology"/>
<name>IF1C_JASNU</name>
<dbReference type="EMBL" id="DQ673255">
    <property type="protein sequence ID" value="ABG74661.1"/>
    <property type="molecule type" value="Genomic_DNA"/>
</dbReference>
<dbReference type="RefSeq" id="YP_778524.1">
    <property type="nucleotide sequence ID" value="NC_008407.1"/>
</dbReference>
<dbReference type="SMR" id="Q06R97"/>
<dbReference type="GeneID" id="4319789"/>
<dbReference type="GO" id="GO:0009507">
    <property type="term" value="C:chloroplast"/>
    <property type="evidence" value="ECO:0007669"/>
    <property type="project" value="UniProtKB-SubCell"/>
</dbReference>
<dbReference type="GO" id="GO:0005829">
    <property type="term" value="C:cytosol"/>
    <property type="evidence" value="ECO:0007669"/>
    <property type="project" value="TreeGrafter"/>
</dbReference>
<dbReference type="GO" id="GO:0043022">
    <property type="term" value="F:ribosome binding"/>
    <property type="evidence" value="ECO:0007669"/>
    <property type="project" value="UniProtKB-UniRule"/>
</dbReference>
<dbReference type="GO" id="GO:0019843">
    <property type="term" value="F:rRNA binding"/>
    <property type="evidence" value="ECO:0007669"/>
    <property type="project" value="UniProtKB-UniRule"/>
</dbReference>
<dbReference type="GO" id="GO:0003743">
    <property type="term" value="F:translation initiation factor activity"/>
    <property type="evidence" value="ECO:0007669"/>
    <property type="project" value="UniProtKB-UniRule"/>
</dbReference>
<dbReference type="CDD" id="cd04451">
    <property type="entry name" value="S1_IF1"/>
    <property type="match status" value="1"/>
</dbReference>
<dbReference type="FunFam" id="2.40.50.140:FF:000002">
    <property type="entry name" value="Translation initiation factor IF-1"/>
    <property type="match status" value="1"/>
</dbReference>
<dbReference type="Gene3D" id="2.40.50.140">
    <property type="entry name" value="Nucleic acid-binding proteins"/>
    <property type="match status" value="1"/>
</dbReference>
<dbReference type="HAMAP" id="MF_00075">
    <property type="entry name" value="IF_1"/>
    <property type="match status" value="1"/>
</dbReference>
<dbReference type="InterPro" id="IPR012340">
    <property type="entry name" value="NA-bd_OB-fold"/>
</dbReference>
<dbReference type="InterPro" id="IPR006196">
    <property type="entry name" value="RNA-binding_domain_S1_IF1"/>
</dbReference>
<dbReference type="InterPro" id="IPR004368">
    <property type="entry name" value="TIF_IF1"/>
</dbReference>
<dbReference type="NCBIfam" id="TIGR00008">
    <property type="entry name" value="infA"/>
    <property type="match status" value="1"/>
</dbReference>
<dbReference type="PANTHER" id="PTHR33370">
    <property type="entry name" value="TRANSLATION INITIATION FACTOR IF-1, CHLOROPLASTIC"/>
    <property type="match status" value="1"/>
</dbReference>
<dbReference type="PANTHER" id="PTHR33370:SF1">
    <property type="entry name" value="TRANSLATION INITIATION FACTOR IF-1, CHLOROPLASTIC"/>
    <property type="match status" value="1"/>
</dbReference>
<dbReference type="Pfam" id="PF01176">
    <property type="entry name" value="eIF-1a"/>
    <property type="match status" value="1"/>
</dbReference>
<dbReference type="SUPFAM" id="SSF50249">
    <property type="entry name" value="Nucleic acid-binding proteins"/>
    <property type="match status" value="1"/>
</dbReference>
<dbReference type="PROSITE" id="PS50832">
    <property type="entry name" value="S1_IF1_TYPE"/>
    <property type="match status" value="1"/>
</dbReference>
<reference key="1">
    <citation type="journal article" date="2007" name="Mol. Biol. Evol.">
        <title>Gene relocations within chloroplast genomes of Jasminum and Menodora (Oleaceae) are due to multiple, overlapping inversions.</title>
        <authorList>
            <person name="Lee H.-L."/>
            <person name="Jansen R.K."/>
            <person name="Chumley T.W."/>
            <person name="Kim K.-J."/>
        </authorList>
    </citation>
    <scope>NUCLEOTIDE SEQUENCE [LARGE SCALE GENOMIC DNA]</scope>
</reference>